<accession>Q12A42</accession>
<name>FABZ_POLSJ</name>
<organism>
    <name type="scientific">Polaromonas sp. (strain JS666 / ATCC BAA-500)</name>
    <dbReference type="NCBI Taxonomy" id="296591"/>
    <lineage>
        <taxon>Bacteria</taxon>
        <taxon>Pseudomonadati</taxon>
        <taxon>Pseudomonadota</taxon>
        <taxon>Betaproteobacteria</taxon>
        <taxon>Burkholderiales</taxon>
        <taxon>Comamonadaceae</taxon>
        <taxon>Polaromonas</taxon>
    </lineage>
</organism>
<proteinExistence type="inferred from homology"/>
<comment type="function">
    <text evidence="1">Involved in unsaturated fatty acids biosynthesis. Catalyzes the dehydration of short chain beta-hydroxyacyl-ACPs and long chain saturated and unsaturated beta-hydroxyacyl-ACPs.</text>
</comment>
<comment type="catalytic activity">
    <reaction evidence="1">
        <text>a (3R)-hydroxyacyl-[ACP] = a (2E)-enoyl-[ACP] + H2O</text>
        <dbReference type="Rhea" id="RHEA:13097"/>
        <dbReference type="Rhea" id="RHEA-COMP:9925"/>
        <dbReference type="Rhea" id="RHEA-COMP:9945"/>
        <dbReference type="ChEBI" id="CHEBI:15377"/>
        <dbReference type="ChEBI" id="CHEBI:78784"/>
        <dbReference type="ChEBI" id="CHEBI:78827"/>
        <dbReference type="EC" id="4.2.1.59"/>
    </reaction>
</comment>
<comment type="subcellular location">
    <subcellularLocation>
        <location evidence="1">Cytoplasm</location>
    </subcellularLocation>
</comment>
<comment type="similarity">
    <text evidence="1">Belongs to the thioester dehydratase family. FabZ subfamily.</text>
</comment>
<comment type="sequence caution" evidence="2">
    <conflict type="erroneous initiation">
        <sequence resource="EMBL-CDS" id="ABE44600"/>
    </conflict>
</comment>
<gene>
    <name evidence="1" type="primary">fabZ</name>
    <name type="ordered locus">Bpro_2684</name>
</gene>
<feature type="chain" id="PRO_0000340795" description="3-hydroxyacyl-[acyl-carrier-protein] dehydratase FabZ">
    <location>
        <begin position="1"/>
        <end position="145"/>
    </location>
</feature>
<feature type="active site" evidence="1">
    <location>
        <position position="47"/>
    </location>
</feature>
<sequence>MDIHQILKQLPHRYPILLVDRVLEIEKGKRIKALKNVTMNEPFFMGHFPHHPVMPGVLMLEAMAQAAALLAFETLGVTPDDKTVYYFAGIDGARFKRPVEPGDQLIMDVTLERMKAGIFKFKGVTRVGEAIACEAELMCTMRTIA</sequence>
<reference key="1">
    <citation type="journal article" date="2008" name="Appl. Environ. Microbiol.">
        <title>The genome of Polaromonas sp. strain JS666: insights into the evolution of a hydrocarbon- and xenobiotic-degrading bacterium, and features of relevance to biotechnology.</title>
        <authorList>
            <person name="Mattes T.E."/>
            <person name="Alexander A.K."/>
            <person name="Richardson P.M."/>
            <person name="Munk A.C."/>
            <person name="Han C.S."/>
            <person name="Stothard P."/>
            <person name="Coleman N.V."/>
        </authorList>
    </citation>
    <scope>NUCLEOTIDE SEQUENCE [LARGE SCALE GENOMIC DNA]</scope>
    <source>
        <strain>JS666 / ATCC BAA-500</strain>
    </source>
</reference>
<protein>
    <recommendedName>
        <fullName evidence="1">3-hydroxyacyl-[acyl-carrier-protein] dehydratase FabZ</fullName>
        <ecNumber evidence="1">4.2.1.59</ecNumber>
    </recommendedName>
    <alternativeName>
        <fullName evidence="1">(3R)-hydroxymyristoyl-[acyl-carrier-protein] dehydratase</fullName>
        <shortName evidence="1">(3R)-hydroxymyristoyl-ACP dehydrase</shortName>
    </alternativeName>
    <alternativeName>
        <fullName evidence="1">Beta-hydroxyacyl-ACP dehydratase</fullName>
    </alternativeName>
</protein>
<evidence type="ECO:0000255" key="1">
    <source>
        <dbReference type="HAMAP-Rule" id="MF_00406"/>
    </source>
</evidence>
<evidence type="ECO:0000305" key="2"/>
<keyword id="KW-0963">Cytoplasm</keyword>
<keyword id="KW-0441">Lipid A biosynthesis</keyword>
<keyword id="KW-0444">Lipid biosynthesis</keyword>
<keyword id="KW-0443">Lipid metabolism</keyword>
<keyword id="KW-0456">Lyase</keyword>
<keyword id="KW-1185">Reference proteome</keyword>
<dbReference type="EC" id="4.2.1.59" evidence="1"/>
<dbReference type="EMBL" id="CP000316">
    <property type="protein sequence ID" value="ABE44600.1"/>
    <property type="status" value="ALT_INIT"/>
    <property type="molecule type" value="Genomic_DNA"/>
</dbReference>
<dbReference type="RefSeq" id="WP_011483598.1">
    <property type="nucleotide sequence ID" value="NC_007948.1"/>
</dbReference>
<dbReference type="SMR" id="Q12A42"/>
<dbReference type="STRING" id="296591.Bpro_2684"/>
<dbReference type="KEGG" id="pol:Bpro_2684"/>
<dbReference type="eggNOG" id="COG0764">
    <property type="taxonomic scope" value="Bacteria"/>
</dbReference>
<dbReference type="HOGENOM" id="CLU_078912_1_0_4"/>
<dbReference type="OrthoDB" id="9772788at2"/>
<dbReference type="Proteomes" id="UP000001983">
    <property type="component" value="Chromosome"/>
</dbReference>
<dbReference type="GO" id="GO:0005737">
    <property type="term" value="C:cytoplasm"/>
    <property type="evidence" value="ECO:0007669"/>
    <property type="project" value="UniProtKB-SubCell"/>
</dbReference>
<dbReference type="GO" id="GO:0016020">
    <property type="term" value="C:membrane"/>
    <property type="evidence" value="ECO:0007669"/>
    <property type="project" value="GOC"/>
</dbReference>
<dbReference type="GO" id="GO:0019171">
    <property type="term" value="F:(3R)-hydroxyacyl-[acyl-carrier-protein] dehydratase activity"/>
    <property type="evidence" value="ECO:0007669"/>
    <property type="project" value="UniProtKB-EC"/>
</dbReference>
<dbReference type="GO" id="GO:0006633">
    <property type="term" value="P:fatty acid biosynthetic process"/>
    <property type="evidence" value="ECO:0007669"/>
    <property type="project" value="UniProtKB-UniRule"/>
</dbReference>
<dbReference type="GO" id="GO:0009245">
    <property type="term" value="P:lipid A biosynthetic process"/>
    <property type="evidence" value="ECO:0007669"/>
    <property type="project" value="UniProtKB-UniRule"/>
</dbReference>
<dbReference type="CDD" id="cd01288">
    <property type="entry name" value="FabZ"/>
    <property type="match status" value="1"/>
</dbReference>
<dbReference type="FunFam" id="3.10.129.10:FF:000001">
    <property type="entry name" value="3-hydroxyacyl-[acyl-carrier-protein] dehydratase FabZ"/>
    <property type="match status" value="1"/>
</dbReference>
<dbReference type="Gene3D" id="3.10.129.10">
    <property type="entry name" value="Hotdog Thioesterase"/>
    <property type="match status" value="1"/>
</dbReference>
<dbReference type="HAMAP" id="MF_00406">
    <property type="entry name" value="FabZ"/>
    <property type="match status" value="1"/>
</dbReference>
<dbReference type="InterPro" id="IPR013114">
    <property type="entry name" value="FabA_FabZ"/>
</dbReference>
<dbReference type="InterPro" id="IPR010084">
    <property type="entry name" value="FabZ"/>
</dbReference>
<dbReference type="InterPro" id="IPR029069">
    <property type="entry name" value="HotDog_dom_sf"/>
</dbReference>
<dbReference type="NCBIfam" id="TIGR01750">
    <property type="entry name" value="fabZ"/>
    <property type="match status" value="1"/>
</dbReference>
<dbReference type="NCBIfam" id="NF000582">
    <property type="entry name" value="PRK00006.1"/>
    <property type="match status" value="1"/>
</dbReference>
<dbReference type="PANTHER" id="PTHR30272">
    <property type="entry name" value="3-HYDROXYACYL-[ACYL-CARRIER-PROTEIN] DEHYDRATASE"/>
    <property type="match status" value="1"/>
</dbReference>
<dbReference type="PANTHER" id="PTHR30272:SF1">
    <property type="entry name" value="3-HYDROXYACYL-[ACYL-CARRIER-PROTEIN] DEHYDRATASE"/>
    <property type="match status" value="1"/>
</dbReference>
<dbReference type="Pfam" id="PF07977">
    <property type="entry name" value="FabA"/>
    <property type="match status" value="1"/>
</dbReference>
<dbReference type="SUPFAM" id="SSF54637">
    <property type="entry name" value="Thioesterase/thiol ester dehydrase-isomerase"/>
    <property type="match status" value="1"/>
</dbReference>